<proteinExistence type="evidence at protein level"/>
<evidence type="ECO:0000250" key="1"/>
<evidence type="ECO:0000256" key="2">
    <source>
        <dbReference type="SAM" id="MobiDB-lite"/>
    </source>
</evidence>
<evidence type="ECO:0000269" key="3">
    <source>
    </source>
</evidence>
<evidence type="ECO:0000269" key="4">
    <source>
    </source>
</evidence>
<evidence type="ECO:0000269" key="5">
    <source>
    </source>
</evidence>
<evidence type="ECO:0000305" key="6"/>
<gene>
    <name type="primary">PPP4R2r</name>
    <name type="ORF">CG2890</name>
</gene>
<protein>
    <recommendedName>
        <fullName>Serine/threonine-protein phosphatase 4 regulatory subunit 2</fullName>
    </recommendedName>
    <alternativeName>
        <fullName>PPP4R2-related protein</fullName>
    </alternativeName>
</protein>
<keyword id="KW-0597">Phosphoprotein</keyword>
<keyword id="KW-1185">Reference proteome</keyword>
<sequence length="609" mass="66809">MVTMENSDEIMQILERFTDLKQKEIPKELEEYLQYVAKTGDTIFKWSSLKYLFREKLLSVIKHFNEDSPRLEEIPNYPNVDPFNYETMKSSLLERLDLFNAAPFTVQRLCELLIDPRKQYSRIDKFMRALEKNILVVSTIDPGRKRTESENGDSLDSVVNGDLSMEVNIDIEMENNNGNADEGSSPGAGSAGCAQKASCPRSDDNDQPKAKKAKLEIDGEERSEASDETDTEVATRVKNEKDEKNDNDETDSPHEAAEIEEPDEEVDEADQETKTTKQPAYGSQKEGEQEESFPSSADDEAEDPMVSKSIEAEKELVAQEKKREEDKKVAIEPKEEIVKKEEVVESDKPDGKVAQLGDKAVVKKSTPPADGENQEPVKVKAENEKEEKKHAPIKTEKQDDIDSTETDDAPSAEKPAEEKIASSESKPKTKSEDDPEAETKKSQPEKTETEAAEKSVSDEKQAAEPNAESENRNDLTTSKATEAAQESVEKSPVEDASSPAVEDLAAATTPQSPLGAADSAAETPPAETGDDSQASPLVAAVTPPVLALNDQPMEDTPAEEEARVSPSATVEEVVMAESANAGAMATEEAAKDDPAAMEIDDTSQEVMMQ</sequence>
<name>PP4R2_DROME</name>
<comment type="function">
    <text evidence="1 5">Regulatory subunit of serine/threonine-protein phosphatase 4 (PP4) (By similarity). The probable PP4 complex Pp4-19C-PPP4R2r-flfl (PPP4C-PPP4R2-PPP4R3) is required to prevent caspase induced cell death (in vitro).</text>
</comment>
<comment type="subunit">
    <text>Serine/threonine-protein phosphatase 4 (PP4) occurs in different assemblies of the catalytic and one or more regulatory subunits. Probably part of a PP4 PPP4C-PPP4R2-PPP4R3 complex containing Pp4-19C, PPP4R2r and flfl.</text>
</comment>
<comment type="similarity">
    <text evidence="6">Belongs to the PPP4R2 family.</text>
</comment>
<comment type="sequence caution" evidence="6">
    <conflict type="frameshift">
        <sequence resource="EMBL-CDS" id="CAB93523"/>
    </conflict>
</comment>
<organism>
    <name type="scientific">Drosophila melanogaster</name>
    <name type="common">Fruit fly</name>
    <dbReference type="NCBI Taxonomy" id="7227"/>
    <lineage>
        <taxon>Eukaryota</taxon>
        <taxon>Metazoa</taxon>
        <taxon>Ecdysozoa</taxon>
        <taxon>Arthropoda</taxon>
        <taxon>Hexapoda</taxon>
        <taxon>Insecta</taxon>
        <taxon>Pterygota</taxon>
        <taxon>Neoptera</taxon>
        <taxon>Endopterygota</taxon>
        <taxon>Diptera</taxon>
        <taxon>Brachycera</taxon>
        <taxon>Muscomorpha</taxon>
        <taxon>Ephydroidea</taxon>
        <taxon>Drosophilidae</taxon>
        <taxon>Drosophila</taxon>
        <taxon>Sophophora</taxon>
    </lineage>
</organism>
<accession>Q9W2U4</accession>
<accession>Q960Z5</accession>
<accession>Q9NFT0</accession>
<feature type="chain" id="PRO_0000299375" description="Serine/threonine-protein phosphatase 4 regulatory subunit 2">
    <location>
        <begin position="1"/>
        <end position="609"/>
    </location>
</feature>
<feature type="region of interest" description="Disordered" evidence="2">
    <location>
        <begin position="175"/>
        <end position="569"/>
    </location>
</feature>
<feature type="compositionally biased region" description="Low complexity" evidence="2">
    <location>
        <begin position="183"/>
        <end position="194"/>
    </location>
</feature>
<feature type="compositionally biased region" description="Basic and acidic residues" evidence="2">
    <location>
        <begin position="201"/>
        <end position="225"/>
    </location>
</feature>
<feature type="compositionally biased region" description="Basic and acidic residues" evidence="2">
    <location>
        <begin position="233"/>
        <end position="244"/>
    </location>
</feature>
<feature type="compositionally biased region" description="Acidic residues" evidence="2">
    <location>
        <begin position="258"/>
        <end position="270"/>
    </location>
</feature>
<feature type="compositionally biased region" description="Basic and acidic residues" evidence="2">
    <location>
        <begin position="310"/>
        <end position="351"/>
    </location>
</feature>
<feature type="compositionally biased region" description="Basic and acidic residues" evidence="2">
    <location>
        <begin position="375"/>
        <end position="400"/>
    </location>
</feature>
<feature type="compositionally biased region" description="Acidic residues" evidence="2">
    <location>
        <begin position="401"/>
        <end position="410"/>
    </location>
</feature>
<feature type="compositionally biased region" description="Basic and acidic residues" evidence="2">
    <location>
        <begin position="414"/>
        <end position="462"/>
    </location>
</feature>
<feature type="modified residue" description="Phosphoserine" evidence="4">
    <location>
        <position position="68"/>
    </location>
</feature>
<feature type="modified residue" description="Phosphoserine" evidence="4">
    <location>
        <position position="223"/>
    </location>
</feature>
<feature type="modified residue" description="Phosphoserine" evidence="4">
    <location>
        <position position="226"/>
    </location>
</feature>
<feature type="modified residue" description="Phosphoserine" evidence="3 4">
    <location>
        <position position="252"/>
    </location>
</feature>
<feature type="modified residue" description="Phosphothreonine" evidence="3">
    <location>
        <position position="602"/>
    </location>
</feature>
<feature type="modified residue" description="Phosphoserine" evidence="3">
    <location>
        <position position="603"/>
    </location>
</feature>
<feature type="sequence conflict" description="In Ref. 4; CAB93523." evidence="6" ref="4">
    <original>V</original>
    <variation>A</variation>
    <location>
        <position position="2"/>
    </location>
</feature>
<feature type="sequence conflict" description="In Ref. 4; CAB93523." evidence="6" ref="4">
    <original>E</original>
    <variation>Q</variation>
    <location>
        <position position="15"/>
    </location>
</feature>
<feature type="sequence conflict" description="In Ref. 4; CAB93523." evidence="6" ref="4">
    <original>N</original>
    <variation>H</variation>
    <location>
        <position position="84"/>
    </location>
</feature>
<feature type="sequence conflict" description="In Ref. 4; CAB93523." evidence="6" ref="4">
    <original>L</original>
    <variation>M</variation>
    <location>
        <position position="109"/>
    </location>
</feature>
<feature type="sequence conflict" description="In Ref. 4; CAB93523." evidence="6" ref="4">
    <original>R</original>
    <variation>P</variation>
    <location>
        <position position="144"/>
    </location>
</feature>
<feature type="sequence conflict" description="In Ref. 4; CAB93523." evidence="6" ref="4">
    <original>E</original>
    <variation>Q</variation>
    <location>
        <position position="148"/>
    </location>
</feature>
<feature type="sequence conflict" description="In Ref. 4; CAB93523." evidence="6" ref="4">
    <original>S</original>
    <variation>L</variation>
    <location>
        <position position="154"/>
    </location>
</feature>
<feature type="sequence conflict" description="In Ref. 4; CAB93523." evidence="6" ref="4">
    <original>SM</original>
    <variation>FL</variation>
    <location>
        <begin position="164"/>
        <end position="165"/>
    </location>
</feature>
<feature type="sequence conflict" description="In Ref. 4; CAB93523." evidence="6" ref="4">
    <original>E</original>
    <variation>Q</variation>
    <location>
        <position position="174"/>
    </location>
</feature>
<feature type="sequence conflict" description="In Ref. 4; CAB93523." evidence="6" ref="4">
    <original>S</original>
    <variation>F</variation>
    <location>
        <position position="431"/>
    </location>
</feature>
<feature type="sequence conflict" description="In Ref. 4; CAB93523." evidence="6" ref="4">
    <original>P</original>
    <variation>S</variation>
    <location>
        <position position="435"/>
    </location>
</feature>
<dbReference type="EMBL" id="AE014298">
    <property type="protein sequence ID" value="AAF46594.2"/>
    <property type="molecule type" value="Genomic_DNA"/>
</dbReference>
<dbReference type="EMBL" id="AE014298">
    <property type="protein sequence ID" value="AAN09262.1"/>
    <property type="molecule type" value="Genomic_DNA"/>
</dbReference>
<dbReference type="EMBL" id="AE014298">
    <property type="protein sequence ID" value="AAS65307.1"/>
    <property type="molecule type" value="Genomic_DNA"/>
</dbReference>
<dbReference type="EMBL" id="AY051757">
    <property type="protein sequence ID" value="AAK93181.1"/>
    <property type="molecule type" value="mRNA"/>
</dbReference>
<dbReference type="EMBL" id="AJ271449">
    <property type="protein sequence ID" value="CAB93523.1"/>
    <property type="status" value="ALT_FRAME"/>
    <property type="molecule type" value="mRNA"/>
</dbReference>
<dbReference type="RefSeq" id="NP_525083.2">
    <property type="nucleotide sequence ID" value="NM_080344.3"/>
</dbReference>
<dbReference type="RefSeq" id="NP_727427.1">
    <property type="nucleotide sequence ID" value="NM_167232.2"/>
</dbReference>
<dbReference type="RefSeq" id="NP_996400.1">
    <property type="nucleotide sequence ID" value="NM_206677.2"/>
</dbReference>
<dbReference type="BioGRID" id="58407">
    <property type="interactions" value="3"/>
</dbReference>
<dbReference type="FunCoup" id="Q9W2U4">
    <property type="interactions" value="123"/>
</dbReference>
<dbReference type="IntAct" id="Q9W2U4">
    <property type="interactions" value="6"/>
</dbReference>
<dbReference type="STRING" id="7227.FBpp0071386"/>
<dbReference type="GlyGen" id="Q9W2U4">
    <property type="glycosylation" value="1 site"/>
</dbReference>
<dbReference type="iPTMnet" id="Q9W2U4"/>
<dbReference type="PaxDb" id="7227-FBpp0071386"/>
<dbReference type="DNASU" id="31979"/>
<dbReference type="EnsemblMetazoa" id="FBtr0071451">
    <property type="protein sequence ID" value="FBpp0071386"/>
    <property type="gene ID" value="FBgn0030208"/>
</dbReference>
<dbReference type="EnsemblMetazoa" id="FBtr0071452">
    <property type="protein sequence ID" value="FBpp0071387"/>
    <property type="gene ID" value="FBgn0030208"/>
</dbReference>
<dbReference type="EnsemblMetazoa" id="FBtr0071453">
    <property type="protein sequence ID" value="FBpp0089154"/>
    <property type="gene ID" value="FBgn0030208"/>
</dbReference>
<dbReference type="GeneID" id="31979"/>
<dbReference type="KEGG" id="dme:Dmel_CG2890"/>
<dbReference type="AGR" id="FB:FBgn0030208"/>
<dbReference type="CTD" id="31979"/>
<dbReference type="FlyBase" id="FBgn0030208">
    <property type="gene designation" value="PPP4R2r"/>
</dbReference>
<dbReference type="VEuPathDB" id="VectorBase:FBgn0030208"/>
<dbReference type="eggNOG" id="KOG3175">
    <property type="taxonomic scope" value="Eukaryota"/>
</dbReference>
<dbReference type="GeneTree" id="ENSGT00940000162859"/>
<dbReference type="HOGENOM" id="CLU_445691_0_0_1"/>
<dbReference type="InParanoid" id="Q9W2U4"/>
<dbReference type="OMA" id="PMEDTPV"/>
<dbReference type="OrthoDB" id="341898at2759"/>
<dbReference type="PhylomeDB" id="Q9W2U4"/>
<dbReference type="Reactome" id="R-DME-5693607">
    <property type="pathway name" value="Processing of DNA double-strand break ends"/>
</dbReference>
<dbReference type="SignaLink" id="Q9W2U4"/>
<dbReference type="BioGRID-ORCS" id="31979">
    <property type="hits" value="0 hits in 1 CRISPR screen"/>
</dbReference>
<dbReference type="ChiTaRS" id="PPP4R2r">
    <property type="organism name" value="fly"/>
</dbReference>
<dbReference type="GenomeRNAi" id="31979"/>
<dbReference type="PRO" id="PR:Q9W2U4"/>
<dbReference type="Proteomes" id="UP000000803">
    <property type="component" value="Chromosome X"/>
</dbReference>
<dbReference type="Bgee" id="FBgn0030208">
    <property type="expression patterns" value="Expressed in T neuron T5a (Drosophila) in embryonic/larval optic lobe (Drosophila) and 208 other cell types or tissues"/>
</dbReference>
<dbReference type="ExpressionAtlas" id="Q9W2U4">
    <property type="expression patterns" value="baseline and differential"/>
</dbReference>
<dbReference type="GO" id="GO:0000775">
    <property type="term" value="C:chromosome, centromeric region"/>
    <property type="evidence" value="ECO:0000353"/>
    <property type="project" value="FlyBase"/>
</dbReference>
<dbReference type="GO" id="GO:0005737">
    <property type="term" value="C:cytoplasm"/>
    <property type="evidence" value="ECO:0000318"/>
    <property type="project" value="GO_Central"/>
</dbReference>
<dbReference type="GO" id="GO:0005634">
    <property type="term" value="C:nucleus"/>
    <property type="evidence" value="ECO:0000318"/>
    <property type="project" value="GO_Central"/>
</dbReference>
<dbReference type="GO" id="GO:0030289">
    <property type="term" value="C:protein phosphatase 4 complex"/>
    <property type="evidence" value="ECO:0000314"/>
    <property type="project" value="FlyBase"/>
</dbReference>
<dbReference type="GO" id="GO:0019888">
    <property type="term" value="F:protein phosphatase regulator activity"/>
    <property type="evidence" value="ECO:0000318"/>
    <property type="project" value="GO_Central"/>
</dbReference>
<dbReference type="GO" id="GO:0000278">
    <property type="term" value="P:mitotic cell cycle"/>
    <property type="evidence" value="ECO:0000315"/>
    <property type="project" value="FlyBase"/>
</dbReference>
<dbReference type="GO" id="GO:0061060">
    <property type="term" value="P:negative regulation of peptidoglycan recognition protein signaling pathway"/>
    <property type="evidence" value="ECO:0000315"/>
    <property type="project" value="FlyBase"/>
</dbReference>
<dbReference type="GO" id="GO:0045879">
    <property type="term" value="P:negative regulation of smoothened signaling pathway"/>
    <property type="evidence" value="ECO:0000315"/>
    <property type="project" value="FlyBase"/>
</dbReference>
<dbReference type="InterPro" id="IPR015267">
    <property type="entry name" value="PPP4R2"/>
</dbReference>
<dbReference type="PANTHER" id="PTHR16487">
    <property type="entry name" value="PPP4R2-RELATED PROTEIN"/>
    <property type="match status" value="1"/>
</dbReference>
<dbReference type="PANTHER" id="PTHR16487:SF0">
    <property type="entry name" value="PROTEIN PHOSPHATASE 4 REGULATORY SUBUNIT 2-RELATED"/>
    <property type="match status" value="1"/>
</dbReference>
<dbReference type="Pfam" id="PF09184">
    <property type="entry name" value="PPP4R2"/>
    <property type="match status" value="1"/>
</dbReference>
<reference key="1">
    <citation type="journal article" date="2000" name="Science">
        <title>The genome sequence of Drosophila melanogaster.</title>
        <authorList>
            <person name="Adams M.D."/>
            <person name="Celniker S.E."/>
            <person name="Holt R.A."/>
            <person name="Evans C.A."/>
            <person name="Gocayne J.D."/>
            <person name="Amanatides P.G."/>
            <person name="Scherer S.E."/>
            <person name="Li P.W."/>
            <person name="Hoskins R.A."/>
            <person name="Galle R.F."/>
            <person name="George R.A."/>
            <person name="Lewis S.E."/>
            <person name="Richards S."/>
            <person name="Ashburner M."/>
            <person name="Henderson S.N."/>
            <person name="Sutton G.G."/>
            <person name="Wortman J.R."/>
            <person name="Yandell M.D."/>
            <person name="Zhang Q."/>
            <person name="Chen L.X."/>
            <person name="Brandon R.C."/>
            <person name="Rogers Y.-H.C."/>
            <person name="Blazej R.G."/>
            <person name="Champe M."/>
            <person name="Pfeiffer B.D."/>
            <person name="Wan K.H."/>
            <person name="Doyle C."/>
            <person name="Baxter E.G."/>
            <person name="Helt G."/>
            <person name="Nelson C.R."/>
            <person name="Miklos G.L.G."/>
            <person name="Abril J.F."/>
            <person name="Agbayani A."/>
            <person name="An H.-J."/>
            <person name="Andrews-Pfannkoch C."/>
            <person name="Baldwin D."/>
            <person name="Ballew R.M."/>
            <person name="Basu A."/>
            <person name="Baxendale J."/>
            <person name="Bayraktaroglu L."/>
            <person name="Beasley E.M."/>
            <person name="Beeson K.Y."/>
            <person name="Benos P.V."/>
            <person name="Berman B.P."/>
            <person name="Bhandari D."/>
            <person name="Bolshakov S."/>
            <person name="Borkova D."/>
            <person name="Botchan M.R."/>
            <person name="Bouck J."/>
            <person name="Brokstein P."/>
            <person name="Brottier P."/>
            <person name="Burtis K.C."/>
            <person name="Busam D.A."/>
            <person name="Butler H."/>
            <person name="Cadieu E."/>
            <person name="Center A."/>
            <person name="Chandra I."/>
            <person name="Cherry J.M."/>
            <person name="Cawley S."/>
            <person name="Dahlke C."/>
            <person name="Davenport L.B."/>
            <person name="Davies P."/>
            <person name="de Pablos B."/>
            <person name="Delcher A."/>
            <person name="Deng Z."/>
            <person name="Mays A.D."/>
            <person name="Dew I."/>
            <person name="Dietz S.M."/>
            <person name="Dodson K."/>
            <person name="Doup L.E."/>
            <person name="Downes M."/>
            <person name="Dugan-Rocha S."/>
            <person name="Dunkov B.C."/>
            <person name="Dunn P."/>
            <person name="Durbin K.J."/>
            <person name="Evangelista C.C."/>
            <person name="Ferraz C."/>
            <person name="Ferriera S."/>
            <person name="Fleischmann W."/>
            <person name="Fosler C."/>
            <person name="Gabrielian A.E."/>
            <person name="Garg N.S."/>
            <person name="Gelbart W.M."/>
            <person name="Glasser K."/>
            <person name="Glodek A."/>
            <person name="Gong F."/>
            <person name="Gorrell J.H."/>
            <person name="Gu Z."/>
            <person name="Guan P."/>
            <person name="Harris M."/>
            <person name="Harris N.L."/>
            <person name="Harvey D.A."/>
            <person name="Heiman T.J."/>
            <person name="Hernandez J.R."/>
            <person name="Houck J."/>
            <person name="Hostin D."/>
            <person name="Houston K.A."/>
            <person name="Howland T.J."/>
            <person name="Wei M.-H."/>
            <person name="Ibegwam C."/>
            <person name="Jalali M."/>
            <person name="Kalush F."/>
            <person name="Karpen G.H."/>
            <person name="Ke Z."/>
            <person name="Kennison J.A."/>
            <person name="Ketchum K.A."/>
            <person name="Kimmel B.E."/>
            <person name="Kodira C.D."/>
            <person name="Kraft C.L."/>
            <person name="Kravitz S."/>
            <person name="Kulp D."/>
            <person name="Lai Z."/>
            <person name="Lasko P."/>
            <person name="Lei Y."/>
            <person name="Levitsky A.A."/>
            <person name="Li J.H."/>
            <person name="Li Z."/>
            <person name="Liang Y."/>
            <person name="Lin X."/>
            <person name="Liu X."/>
            <person name="Mattei B."/>
            <person name="McIntosh T.C."/>
            <person name="McLeod M.P."/>
            <person name="McPherson D."/>
            <person name="Merkulov G."/>
            <person name="Milshina N.V."/>
            <person name="Mobarry C."/>
            <person name="Morris J."/>
            <person name="Moshrefi A."/>
            <person name="Mount S.M."/>
            <person name="Moy M."/>
            <person name="Murphy B."/>
            <person name="Murphy L."/>
            <person name="Muzny D.M."/>
            <person name="Nelson D.L."/>
            <person name="Nelson D.R."/>
            <person name="Nelson K.A."/>
            <person name="Nixon K."/>
            <person name="Nusskern D.R."/>
            <person name="Pacleb J.M."/>
            <person name="Palazzolo M."/>
            <person name="Pittman G.S."/>
            <person name="Pan S."/>
            <person name="Pollard J."/>
            <person name="Puri V."/>
            <person name="Reese M.G."/>
            <person name="Reinert K."/>
            <person name="Remington K."/>
            <person name="Saunders R.D.C."/>
            <person name="Scheeler F."/>
            <person name="Shen H."/>
            <person name="Shue B.C."/>
            <person name="Siden-Kiamos I."/>
            <person name="Simpson M."/>
            <person name="Skupski M.P."/>
            <person name="Smith T.J."/>
            <person name="Spier E."/>
            <person name="Spradling A.C."/>
            <person name="Stapleton M."/>
            <person name="Strong R."/>
            <person name="Sun E."/>
            <person name="Svirskas R."/>
            <person name="Tector C."/>
            <person name="Turner R."/>
            <person name="Venter E."/>
            <person name="Wang A.H."/>
            <person name="Wang X."/>
            <person name="Wang Z.-Y."/>
            <person name="Wassarman D.A."/>
            <person name="Weinstock G.M."/>
            <person name="Weissenbach J."/>
            <person name="Williams S.M."/>
            <person name="Woodage T."/>
            <person name="Worley K.C."/>
            <person name="Wu D."/>
            <person name="Yang S."/>
            <person name="Yao Q.A."/>
            <person name="Ye J."/>
            <person name="Yeh R.-F."/>
            <person name="Zaveri J.S."/>
            <person name="Zhan M."/>
            <person name="Zhang G."/>
            <person name="Zhao Q."/>
            <person name="Zheng L."/>
            <person name="Zheng X.H."/>
            <person name="Zhong F.N."/>
            <person name="Zhong W."/>
            <person name="Zhou X."/>
            <person name="Zhu S.C."/>
            <person name="Zhu X."/>
            <person name="Smith H.O."/>
            <person name="Gibbs R.A."/>
            <person name="Myers E.W."/>
            <person name="Rubin G.M."/>
            <person name="Venter J.C."/>
        </authorList>
    </citation>
    <scope>NUCLEOTIDE SEQUENCE [LARGE SCALE GENOMIC DNA]</scope>
    <source>
        <strain>Berkeley</strain>
    </source>
</reference>
<reference key="2">
    <citation type="journal article" date="2002" name="Genome Biol.">
        <title>Annotation of the Drosophila melanogaster euchromatic genome: a systematic review.</title>
        <authorList>
            <person name="Misra S."/>
            <person name="Crosby M.A."/>
            <person name="Mungall C.J."/>
            <person name="Matthews B.B."/>
            <person name="Campbell K.S."/>
            <person name="Hradecky P."/>
            <person name="Huang Y."/>
            <person name="Kaminker J.S."/>
            <person name="Millburn G.H."/>
            <person name="Prochnik S.E."/>
            <person name="Smith C.D."/>
            <person name="Tupy J.L."/>
            <person name="Whitfield E.J."/>
            <person name="Bayraktaroglu L."/>
            <person name="Berman B.P."/>
            <person name="Bettencourt B.R."/>
            <person name="Celniker S.E."/>
            <person name="de Grey A.D.N.J."/>
            <person name="Drysdale R.A."/>
            <person name="Harris N.L."/>
            <person name="Richter J."/>
            <person name="Russo S."/>
            <person name="Schroeder A.J."/>
            <person name="Shu S.Q."/>
            <person name="Stapleton M."/>
            <person name="Yamada C."/>
            <person name="Ashburner M."/>
            <person name="Gelbart W.M."/>
            <person name="Rubin G.M."/>
            <person name="Lewis S.E."/>
        </authorList>
    </citation>
    <scope>GENOME REANNOTATION</scope>
    <source>
        <strain>Berkeley</strain>
    </source>
</reference>
<reference key="3">
    <citation type="journal article" date="2002" name="Genome Biol.">
        <title>A Drosophila full-length cDNA resource.</title>
        <authorList>
            <person name="Stapleton M."/>
            <person name="Carlson J.W."/>
            <person name="Brokstein P."/>
            <person name="Yu C."/>
            <person name="Champe M."/>
            <person name="George R.A."/>
            <person name="Guarin H."/>
            <person name="Kronmiller B."/>
            <person name="Pacleb J.M."/>
            <person name="Park S."/>
            <person name="Wan K.H."/>
            <person name="Rubin G.M."/>
            <person name="Celniker S.E."/>
        </authorList>
    </citation>
    <scope>NUCLEOTIDE SEQUENCE [LARGE SCALE MRNA]</scope>
    <source>
        <strain>Berkeley</strain>
        <tissue>Embryo</tissue>
    </source>
</reference>
<reference key="4">
    <citation type="journal article" date="2000" name="Biochem. J.">
        <title>A novel 50 kDa protein forms complexes with protein phosphatase 4 and is located at centrosomal microtubule organizing centres.</title>
        <authorList>
            <person name="Hastie C.J."/>
            <person name="Carnegie G.K."/>
            <person name="Morrice N."/>
            <person name="Cohen P.T.W."/>
        </authorList>
    </citation>
    <scope>NUCLEOTIDE SEQUENCE [MRNA] OF 1-435</scope>
</reference>
<reference key="5">
    <citation type="journal article" date="2007" name="Mol. Biosyst.">
        <title>An integrated chemical, mass spectrometric and computational strategy for (quantitative) phosphoproteomics: application to Drosophila melanogaster Kc167 cells.</title>
        <authorList>
            <person name="Bodenmiller B."/>
            <person name="Mueller L.N."/>
            <person name="Pedrioli P.G.A."/>
            <person name="Pflieger D."/>
            <person name="Juenger M.A."/>
            <person name="Eng J.K."/>
            <person name="Aebersold R."/>
            <person name="Tao W.A."/>
        </authorList>
    </citation>
    <scope>PHOSPHORYLATION [LARGE SCALE ANALYSIS] AT SER-252; THR-602 AND SER-603</scope>
    <scope>IDENTIFICATION BY MASS SPECTROMETRY</scope>
</reference>
<reference key="6">
    <citation type="journal article" date="2008" name="Int. J. Biochem. Cell Biol.">
        <title>Depletion of protein phosphatase 4 in human cells reveals essential roles in centrosome maturation, cell migration and the regulation of Rho GTPases.</title>
        <authorList>
            <person name="Martin-Granados C."/>
            <person name="Philp A."/>
            <person name="Oxenham S.K."/>
            <person name="Prescott A.R."/>
            <person name="Cohen P.T.W."/>
        </authorList>
    </citation>
    <scope>PROBABLE COMPONENT OF A COMPLEX WITH PP4-19C AND FLFL</scope>
    <scope>FUNCTION</scope>
</reference>
<reference key="7">
    <citation type="journal article" date="2008" name="J. Proteome Res.">
        <title>Phosphoproteome analysis of Drosophila melanogaster embryos.</title>
        <authorList>
            <person name="Zhai B."/>
            <person name="Villen J."/>
            <person name="Beausoleil S.A."/>
            <person name="Mintseris J."/>
            <person name="Gygi S.P."/>
        </authorList>
    </citation>
    <scope>PHOSPHORYLATION [LARGE SCALE ANALYSIS] AT SER-68; SER-223; SER-226 AND SER-252</scope>
    <scope>IDENTIFICATION BY MASS SPECTROMETRY</scope>
    <source>
        <tissue>Embryo</tissue>
    </source>
</reference>